<reference key="1">
    <citation type="journal article" date="2005" name="Nat. Biotechnol.">
        <title>Complete genome sequence of the plant commensal Pseudomonas fluorescens Pf-5.</title>
        <authorList>
            <person name="Paulsen I.T."/>
            <person name="Press C.M."/>
            <person name="Ravel J."/>
            <person name="Kobayashi D.Y."/>
            <person name="Myers G.S.A."/>
            <person name="Mavrodi D.V."/>
            <person name="DeBoy R.T."/>
            <person name="Seshadri R."/>
            <person name="Ren Q."/>
            <person name="Madupu R."/>
            <person name="Dodson R.J."/>
            <person name="Durkin A.S."/>
            <person name="Brinkac L.M."/>
            <person name="Daugherty S.C."/>
            <person name="Sullivan S.A."/>
            <person name="Rosovitz M.J."/>
            <person name="Gwinn M.L."/>
            <person name="Zhou L."/>
            <person name="Schneider D.J."/>
            <person name="Cartinhour S.W."/>
            <person name="Nelson W.C."/>
            <person name="Weidman J."/>
            <person name="Watkins K."/>
            <person name="Tran K."/>
            <person name="Khouri H."/>
            <person name="Pierson E.A."/>
            <person name="Pierson L.S. III"/>
            <person name="Thomashow L.S."/>
            <person name="Loper J.E."/>
        </authorList>
    </citation>
    <scope>NUCLEOTIDE SEQUENCE [LARGE SCALE GENOMIC DNA]</scope>
    <source>
        <strain>ATCC BAA-477 / NRRL B-23932 / Pf-5</strain>
    </source>
</reference>
<comment type="function">
    <text evidence="1">Catalyzes amidations at positions B, D, E, and G on adenosylcobyrinic A,C-diamide. NH(2) groups are provided by glutamine, and one molecule of ATP is hydrogenolyzed for each amidation.</text>
</comment>
<comment type="pathway">
    <text evidence="1">Cofactor biosynthesis; adenosylcobalamin biosynthesis.</text>
</comment>
<comment type="similarity">
    <text evidence="1">Belongs to the CobB/CobQ family. CobQ subfamily.</text>
</comment>
<gene>
    <name evidence="1" type="primary">cobQ</name>
    <name type="ordered locus">PFL_4426</name>
</gene>
<protein>
    <recommendedName>
        <fullName evidence="1">Cobyric acid synthase</fullName>
    </recommendedName>
</protein>
<proteinExistence type="inferred from homology"/>
<organism>
    <name type="scientific">Pseudomonas fluorescens (strain ATCC BAA-477 / NRRL B-23932 / Pf-5)</name>
    <dbReference type="NCBI Taxonomy" id="220664"/>
    <lineage>
        <taxon>Bacteria</taxon>
        <taxon>Pseudomonadati</taxon>
        <taxon>Pseudomonadota</taxon>
        <taxon>Gammaproteobacteria</taxon>
        <taxon>Pseudomonadales</taxon>
        <taxon>Pseudomonadaceae</taxon>
        <taxon>Pseudomonas</taxon>
    </lineage>
</organism>
<evidence type="ECO:0000255" key="1">
    <source>
        <dbReference type="HAMAP-Rule" id="MF_00028"/>
    </source>
</evidence>
<feature type="chain" id="PRO_0000332370" description="Cobyric acid synthase">
    <location>
        <begin position="1"/>
        <end position="483"/>
    </location>
</feature>
<feature type="domain" description="GATase cobBQ-type" evidence="1">
    <location>
        <begin position="248"/>
        <end position="435"/>
    </location>
</feature>
<feature type="active site" description="Nucleophile" evidence="1">
    <location>
        <position position="329"/>
    </location>
</feature>
<feature type="active site" evidence="1">
    <location>
        <position position="427"/>
    </location>
</feature>
<dbReference type="EMBL" id="CP000076">
    <property type="protein sequence ID" value="AAY93677.1"/>
    <property type="molecule type" value="Genomic_DNA"/>
</dbReference>
<dbReference type="RefSeq" id="WP_011062690.1">
    <property type="nucleotide sequence ID" value="NC_004129.6"/>
</dbReference>
<dbReference type="SMR" id="Q4K8B9"/>
<dbReference type="STRING" id="220664.PFL_4426"/>
<dbReference type="KEGG" id="pfl:PFL_4426"/>
<dbReference type="PATRIC" id="fig|220664.5.peg.4531"/>
<dbReference type="eggNOG" id="COG1492">
    <property type="taxonomic scope" value="Bacteria"/>
</dbReference>
<dbReference type="HOGENOM" id="CLU_019250_2_2_6"/>
<dbReference type="UniPathway" id="UPA00148"/>
<dbReference type="Proteomes" id="UP000008540">
    <property type="component" value="Chromosome"/>
</dbReference>
<dbReference type="GO" id="GO:0015420">
    <property type="term" value="F:ABC-type vitamin B12 transporter activity"/>
    <property type="evidence" value="ECO:0007669"/>
    <property type="project" value="UniProtKB-UniRule"/>
</dbReference>
<dbReference type="GO" id="GO:0003824">
    <property type="term" value="F:catalytic activity"/>
    <property type="evidence" value="ECO:0007669"/>
    <property type="project" value="InterPro"/>
</dbReference>
<dbReference type="GO" id="GO:0009236">
    <property type="term" value="P:cobalamin biosynthetic process"/>
    <property type="evidence" value="ECO:0007669"/>
    <property type="project" value="UniProtKB-UniRule"/>
</dbReference>
<dbReference type="CDD" id="cd05389">
    <property type="entry name" value="CobQ_N"/>
    <property type="match status" value="1"/>
</dbReference>
<dbReference type="CDD" id="cd01750">
    <property type="entry name" value="GATase1_CobQ"/>
    <property type="match status" value="1"/>
</dbReference>
<dbReference type="Gene3D" id="3.40.50.880">
    <property type="match status" value="1"/>
</dbReference>
<dbReference type="Gene3D" id="3.40.50.300">
    <property type="entry name" value="P-loop containing nucleotide triphosphate hydrolases"/>
    <property type="match status" value="1"/>
</dbReference>
<dbReference type="HAMAP" id="MF_00028">
    <property type="entry name" value="CobQ"/>
    <property type="match status" value="1"/>
</dbReference>
<dbReference type="InterPro" id="IPR029062">
    <property type="entry name" value="Class_I_gatase-like"/>
</dbReference>
<dbReference type="InterPro" id="IPR002586">
    <property type="entry name" value="CobQ/CobB/MinD/ParA_Nub-bd_dom"/>
</dbReference>
<dbReference type="InterPro" id="IPR033949">
    <property type="entry name" value="CobQ_GATase1"/>
</dbReference>
<dbReference type="InterPro" id="IPR047045">
    <property type="entry name" value="CobQ_N"/>
</dbReference>
<dbReference type="InterPro" id="IPR004459">
    <property type="entry name" value="CobQ_synth"/>
</dbReference>
<dbReference type="InterPro" id="IPR011698">
    <property type="entry name" value="GATase_3"/>
</dbReference>
<dbReference type="InterPro" id="IPR027417">
    <property type="entry name" value="P-loop_NTPase"/>
</dbReference>
<dbReference type="NCBIfam" id="TIGR00313">
    <property type="entry name" value="cobQ"/>
    <property type="match status" value="1"/>
</dbReference>
<dbReference type="NCBIfam" id="NF001989">
    <property type="entry name" value="PRK00784.1"/>
    <property type="match status" value="1"/>
</dbReference>
<dbReference type="PANTHER" id="PTHR21343:SF1">
    <property type="entry name" value="COBYRIC ACID SYNTHASE"/>
    <property type="match status" value="1"/>
</dbReference>
<dbReference type="PANTHER" id="PTHR21343">
    <property type="entry name" value="DETHIOBIOTIN SYNTHETASE"/>
    <property type="match status" value="1"/>
</dbReference>
<dbReference type="Pfam" id="PF01656">
    <property type="entry name" value="CbiA"/>
    <property type="match status" value="1"/>
</dbReference>
<dbReference type="Pfam" id="PF07685">
    <property type="entry name" value="GATase_3"/>
    <property type="match status" value="1"/>
</dbReference>
<dbReference type="SUPFAM" id="SSF52317">
    <property type="entry name" value="Class I glutamine amidotransferase-like"/>
    <property type="match status" value="1"/>
</dbReference>
<dbReference type="SUPFAM" id="SSF52540">
    <property type="entry name" value="P-loop containing nucleoside triphosphate hydrolases"/>
    <property type="match status" value="1"/>
</dbReference>
<dbReference type="PROSITE" id="PS51274">
    <property type="entry name" value="GATASE_COBBQ"/>
    <property type="match status" value="1"/>
</dbReference>
<keyword id="KW-0169">Cobalamin biosynthesis</keyword>
<keyword id="KW-0315">Glutamine amidotransferase</keyword>
<accession>Q4K8B9</accession>
<name>COBQ_PSEF5</name>
<sequence length="483" mass="51565">MSTLMVQGTTSDAGKSTLVTALCRWLWRQGVSVVPFKPQNMALNSAVTADGGEIGRAQAVQAQAANLAPHTDMNPVLLKPNSDTGSQVIIHGRAVTSMNAVAYHDYKAIAMQAVLASHERLKSAYQVVMVEGAGSPAEINLRAGDIANMGFAEAVDCPVLLIADINRGGVFAHLVGTLELLSPSEQARVKGFIINRFRGDLALLQPGLDWLEARTGKPVIGVLPYVLDLHLEAEDGIDQRQVGKVEQLLKVVVPVLPRISNHTDFDPLRLHPQVDLQFIGPGQAIPAADLIILPGSKSVRGDLAYLRSNGWDRAVARHLRYGGKVLGICGGLQMLGEQVHDPLGLEGAAGSSPGLGLLAFETVLEEEKQLRNVSGRLSLENAAVSGYEIHAGVTRGPALELAAVQLDDGRSDGACSADGQILGTYLHGLFETPAACSALLRWAGLEAVQEVDYHALRERDIERLADLVEHHLDTAALRRLCGL</sequence>